<gene>
    <name evidence="1" type="primary">argA</name>
    <name type="ordered locus">PSPA7_5949</name>
</gene>
<evidence type="ECO:0000255" key="1">
    <source>
        <dbReference type="HAMAP-Rule" id="MF_01105"/>
    </source>
</evidence>
<keyword id="KW-0012">Acyltransferase</keyword>
<keyword id="KW-0028">Amino-acid biosynthesis</keyword>
<keyword id="KW-0055">Arginine biosynthesis</keyword>
<keyword id="KW-0963">Cytoplasm</keyword>
<keyword id="KW-0808">Transferase</keyword>
<comment type="catalytic activity">
    <reaction evidence="1">
        <text>L-glutamate + acetyl-CoA = N-acetyl-L-glutamate + CoA + H(+)</text>
        <dbReference type="Rhea" id="RHEA:24292"/>
        <dbReference type="ChEBI" id="CHEBI:15378"/>
        <dbReference type="ChEBI" id="CHEBI:29985"/>
        <dbReference type="ChEBI" id="CHEBI:44337"/>
        <dbReference type="ChEBI" id="CHEBI:57287"/>
        <dbReference type="ChEBI" id="CHEBI:57288"/>
        <dbReference type="EC" id="2.3.1.1"/>
    </reaction>
</comment>
<comment type="pathway">
    <text evidence="1">Amino-acid biosynthesis; L-arginine biosynthesis; N(2)-acetyl-L-ornithine from L-glutamate: step 1/4.</text>
</comment>
<comment type="subcellular location">
    <subcellularLocation>
        <location evidence="1">Cytoplasm</location>
    </subcellularLocation>
</comment>
<comment type="similarity">
    <text evidence="1">Belongs to the acetyltransferase family. ArgA subfamily.</text>
</comment>
<sequence length="432" mass="47875">MPDYVNWLRHASPYINSHRDRTFVVMLPGEGVEHPNFGNIVHDLVLLHSLGARLVLVHGSRPQIESRLAARGLAPRYHRDLRVTDAPTLECVIDAVGSLRIAIEARLSMDMAASPMQGARLRVAGGNLVTARPIGVVEGVDYHHTGEVRRIDRKGIGRLLDERSIVLLSPLGYSPTGEIFNLACEDVAMRAAIDLEAEKLILYGAEQGLLDASGKLVRELRPQQVPAHLQRLGNSYQAELLDAAAQACRAGVKRSHIVSYTEDGALLSELFTRTGNGTLVAQEQFEQLREAGIEDVGGLIELIRPLEEQGILVRRSREVLEREIEQFSIVEREGLIIACAALYPIADSEAGELACLAVNPEYRHGGRGDELLERIEERARGLGLKTLFVLTTRTAHWFRERGFQPSSVERLPAARASLYNFQRNSQVFEKSL</sequence>
<feature type="chain" id="PRO_1000084815" description="Amino-acid acetyltransferase">
    <location>
        <begin position="1"/>
        <end position="432"/>
    </location>
</feature>
<feature type="domain" description="N-acetyltransferase" evidence="1">
    <location>
        <begin position="286"/>
        <end position="425"/>
    </location>
</feature>
<reference key="1">
    <citation type="submission" date="2007-06" db="EMBL/GenBank/DDBJ databases">
        <authorList>
            <person name="Dodson R.J."/>
            <person name="Harkins D."/>
            <person name="Paulsen I.T."/>
        </authorList>
    </citation>
    <scope>NUCLEOTIDE SEQUENCE [LARGE SCALE GENOMIC DNA]</scope>
    <source>
        <strain>DSM 24068 / PA7</strain>
    </source>
</reference>
<organism>
    <name type="scientific">Pseudomonas paraeruginosa (strain DSM 24068 / PA7)</name>
    <name type="common">Pseudomonas aeruginosa (strain PA7)</name>
    <dbReference type="NCBI Taxonomy" id="381754"/>
    <lineage>
        <taxon>Bacteria</taxon>
        <taxon>Pseudomonadati</taxon>
        <taxon>Pseudomonadota</taxon>
        <taxon>Gammaproteobacteria</taxon>
        <taxon>Pseudomonadales</taxon>
        <taxon>Pseudomonadaceae</taxon>
        <taxon>Pseudomonas</taxon>
        <taxon>Pseudomonas paraeruginosa</taxon>
    </lineage>
</organism>
<accession>A6VDY0</accession>
<dbReference type="EC" id="2.3.1.1" evidence="1"/>
<dbReference type="EMBL" id="CP000744">
    <property type="protein sequence ID" value="ABR83664.1"/>
    <property type="molecule type" value="Genomic_DNA"/>
</dbReference>
<dbReference type="RefSeq" id="WP_012077831.1">
    <property type="nucleotide sequence ID" value="NC_009656.1"/>
</dbReference>
<dbReference type="SMR" id="A6VDY0"/>
<dbReference type="KEGG" id="pap:PSPA7_5949"/>
<dbReference type="HOGENOM" id="CLU_024773_0_0_6"/>
<dbReference type="UniPathway" id="UPA00068">
    <property type="reaction ID" value="UER00106"/>
</dbReference>
<dbReference type="Proteomes" id="UP000001582">
    <property type="component" value="Chromosome"/>
</dbReference>
<dbReference type="GO" id="GO:0005737">
    <property type="term" value="C:cytoplasm"/>
    <property type="evidence" value="ECO:0007669"/>
    <property type="project" value="UniProtKB-SubCell"/>
</dbReference>
<dbReference type="GO" id="GO:0004042">
    <property type="term" value="F:L-glutamate N-acetyltransferase activity"/>
    <property type="evidence" value="ECO:0007669"/>
    <property type="project" value="UniProtKB-UniRule"/>
</dbReference>
<dbReference type="GO" id="GO:0006526">
    <property type="term" value="P:L-arginine biosynthetic process"/>
    <property type="evidence" value="ECO:0007669"/>
    <property type="project" value="UniProtKB-UniRule"/>
</dbReference>
<dbReference type="CDD" id="cd04237">
    <property type="entry name" value="AAK_NAGS-ABP"/>
    <property type="match status" value="1"/>
</dbReference>
<dbReference type="CDD" id="cd04301">
    <property type="entry name" value="NAT_SF"/>
    <property type="match status" value="1"/>
</dbReference>
<dbReference type="FunFam" id="3.40.1160.10:FF:000005">
    <property type="entry name" value="Amino-acid acetyltransferase"/>
    <property type="match status" value="1"/>
</dbReference>
<dbReference type="Gene3D" id="3.40.630.30">
    <property type="match status" value="1"/>
</dbReference>
<dbReference type="Gene3D" id="3.40.1160.10">
    <property type="entry name" value="Acetylglutamate kinase-like"/>
    <property type="match status" value="1"/>
</dbReference>
<dbReference type="HAMAP" id="MF_01105">
    <property type="entry name" value="N_acetyl_glu_synth"/>
    <property type="match status" value="1"/>
</dbReference>
<dbReference type="InterPro" id="IPR036393">
    <property type="entry name" value="AceGlu_kinase-like_sf"/>
</dbReference>
<dbReference type="InterPro" id="IPR016181">
    <property type="entry name" value="Acyl_CoA_acyltransferase"/>
</dbReference>
<dbReference type="InterPro" id="IPR001048">
    <property type="entry name" value="Asp/Glu/Uridylate_kinase"/>
</dbReference>
<dbReference type="InterPro" id="IPR000182">
    <property type="entry name" value="GNAT_dom"/>
</dbReference>
<dbReference type="InterPro" id="IPR033719">
    <property type="entry name" value="NAGS_kin"/>
</dbReference>
<dbReference type="InterPro" id="IPR010167">
    <property type="entry name" value="NH2A_AcTrfase"/>
</dbReference>
<dbReference type="NCBIfam" id="TIGR01890">
    <property type="entry name" value="N-Ac-Glu-synth"/>
    <property type="match status" value="1"/>
</dbReference>
<dbReference type="NCBIfam" id="NF003641">
    <property type="entry name" value="PRK05279.1"/>
    <property type="match status" value="1"/>
</dbReference>
<dbReference type="PANTHER" id="PTHR30602">
    <property type="entry name" value="AMINO-ACID ACETYLTRANSFERASE"/>
    <property type="match status" value="1"/>
</dbReference>
<dbReference type="PANTHER" id="PTHR30602:SF12">
    <property type="entry name" value="AMINO-ACID ACETYLTRANSFERASE NAGS1, CHLOROPLASTIC-RELATED"/>
    <property type="match status" value="1"/>
</dbReference>
<dbReference type="Pfam" id="PF00696">
    <property type="entry name" value="AA_kinase"/>
    <property type="match status" value="1"/>
</dbReference>
<dbReference type="Pfam" id="PF00583">
    <property type="entry name" value="Acetyltransf_1"/>
    <property type="match status" value="1"/>
</dbReference>
<dbReference type="PIRSF" id="PIRSF000423">
    <property type="entry name" value="ArgA"/>
    <property type="match status" value="1"/>
</dbReference>
<dbReference type="SUPFAM" id="SSF55729">
    <property type="entry name" value="Acyl-CoA N-acyltransferases (Nat)"/>
    <property type="match status" value="1"/>
</dbReference>
<dbReference type="SUPFAM" id="SSF53633">
    <property type="entry name" value="Carbamate kinase-like"/>
    <property type="match status" value="1"/>
</dbReference>
<dbReference type="PROSITE" id="PS51186">
    <property type="entry name" value="GNAT"/>
    <property type="match status" value="1"/>
</dbReference>
<proteinExistence type="inferred from homology"/>
<name>ARGA_PSEP7</name>
<protein>
    <recommendedName>
        <fullName evidence="1">Amino-acid acetyltransferase</fullName>
        <ecNumber evidence="1">2.3.1.1</ecNumber>
    </recommendedName>
    <alternativeName>
        <fullName evidence="1">N-acetylglutamate synthase</fullName>
        <shortName evidence="1">AGS</shortName>
        <shortName evidence="1">NAGS</shortName>
    </alternativeName>
</protein>